<keyword id="KW-0547">Nucleotide-binding</keyword>
<dbReference type="EMBL" id="AM747720">
    <property type="protein sequence ID" value="CAR53069.1"/>
    <property type="molecule type" value="Genomic_DNA"/>
</dbReference>
<dbReference type="RefSeq" id="WP_006482217.1">
    <property type="nucleotide sequence ID" value="NC_011000.1"/>
</dbReference>
<dbReference type="SMR" id="B4E9G8"/>
<dbReference type="KEGG" id="bcj:BCAL2769"/>
<dbReference type="eggNOG" id="COG1666">
    <property type="taxonomic scope" value="Bacteria"/>
</dbReference>
<dbReference type="HOGENOM" id="CLU_099839_1_0_4"/>
<dbReference type="BioCyc" id="BCEN216591:G1G1V-3068-MONOMER"/>
<dbReference type="Proteomes" id="UP000001035">
    <property type="component" value="Chromosome 1"/>
</dbReference>
<dbReference type="GO" id="GO:0005829">
    <property type="term" value="C:cytosol"/>
    <property type="evidence" value="ECO:0007669"/>
    <property type="project" value="TreeGrafter"/>
</dbReference>
<dbReference type="GO" id="GO:0000166">
    <property type="term" value="F:nucleotide binding"/>
    <property type="evidence" value="ECO:0007669"/>
    <property type="project" value="TreeGrafter"/>
</dbReference>
<dbReference type="CDD" id="cd11740">
    <property type="entry name" value="YajQ_like"/>
    <property type="match status" value="1"/>
</dbReference>
<dbReference type="Gene3D" id="3.30.70.990">
    <property type="entry name" value="YajQ-like, domain 2"/>
    <property type="match status" value="1"/>
</dbReference>
<dbReference type="HAMAP" id="MF_00632">
    <property type="entry name" value="YajQ"/>
    <property type="match status" value="1"/>
</dbReference>
<dbReference type="InterPro" id="IPR007551">
    <property type="entry name" value="DUF520"/>
</dbReference>
<dbReference type="InterPro" id="IPR035570">
    <property type="entry name" value="UPF0234_N"/>
</dbReference>
<dbReference type="InterPro" id="IPR036183">
    <property type="entry name" value="YajQ-like_sf"/>
</dbReference>
<dbReference type="NCBIfam" id="NF003819">
    <property type="entry name" value="PRK05412.1"/>
    <property type="match status" value="1"/>
</dbReference>
<dbReference type="PANTHER" id="PTHR30476">
    <property type="entry name" value="UPF0234 PROTEIN YAJQ"/>
    <property type="match status" value="1"/>
</dbReference>
<dbReference type="PANTHER" id="PTHR30476:SF0">
    <property type="entry name" value="UPF0234 PROTEIN YAJQ"/>
    <property type="match status" value="1"/>
</dbReference>
<dbReference type="Pfam" id="PF04461">
    <property type="entry name" value="DUF520"/>
    <property type="match status" value="1"/>
</dbReference>
<dbReference type="SUPFAM" id="SSF89963">
    <property type="entry name" value="YajQ-like"/>
    <property type="match status" value="2"/>
</dbReference>
<organism>
    <name type="scientific">Burkholderia cenocepacia (strain ATCC BAA-245 / DSM 16553 / LMG 16656 / NCTC 13227 / J2315 / CF5610)</name>
    <name type="common">Burkholderia cepacia (strain J2315)</name>
    <dbReference type="NCBI Taxonomy" id="216591"/>
    <lineage>
        <taxon>Bacteria</taxon>
        <taxon>Pseudomonadati</taxon>
        <taxon>Pseudomonadota</taxon>
        <taxon>Betaproteobacteria</taxon>
        <taxon>Burkholderiales</taxon>
        <taxon>Burkholderiaceae</taxon>
        <taxon>Burkholderia</taxon>
        <taxon>Burkholderia cepacia complex</taxon>
    </lineage>
</organism>
<gene>
    <name type="ordered locus">BceJ2315_27070</name>
    <name type="ORF">BCAL2769</name>
</gene>
<reference key="1">
    <citation type="journal article" date="2009" name="J. Bacteriol.">
        <title>The genome of Burkholderia cenocepacia J2315, an epidemic pathogen of cystic fibrosis patients.</title>
        <authorList>
            <person name="Holden M.T."/>
            <person name="Seth-Smith H.M."/>
            <person name="Crossman L.C."/>
            <person name="Sebaihia M."/>
            <person name="Bentley S.D."/>
            <person name="Cerdeno-Tarraga A.M."/>
            <person name="Thomson N.R."/>
            <person name="Bason N."/>
            <person name="Quail M.A."/>
            <person name="Sharp S."/>
            <person name="Cherevach I."/>
            <person name="Churcher C."/>
            <person name="Goodhead I."/>
            <person name="Hauser H."/>
            <person name="Holroyd N."/>
            <person name="Mungall K."/>
            <person name="Scott P."/>
            <person name="Walker D."/>
            <person name="White B."/>
            <person name="Rose H."/>
            <person name="Iversen P."/>
            <person name="Mil-Homens D."/>
            <person name="Rocha E.P."/>
            <person name="Fialho A.M."/>
            <person name="Baldwin A."/>
            <person name="Dowson C."/>
            <person name="Barrell B.G."/>
            <person name="Govan J.R."/>
            <person name="Vandamme P."/>
            <person name="Hart C.A."/>
            <person name="Mahenthiralingam E."/>
            <person name="Parkhill J."/>
        </authorList>
    </citation>
    <scope>NUCLEOTIDE SEQUENCE [LARGE SCALE GENOMIC DNA]</scope>
    <source>
        <strain>ATCC BAA-245 / DSM 16553 / LMG 16656 / NCTC 13227 / J2315 / CF5610</strain>
    </source>
</reference>
<evidence type="ECO:0000255" key="1">
    <source>
        <dbReference type="HAMAP-Rule" id="MF_00632"/>
    </source>
</evidence>
<accession>B4E9G8</accession>
<sequence length="161" mass="18078">MPSFDVVSEANMIEVKNAIEQSNKEISTRFDFKGSDARVEQKERELTLFADDDFKLGQVKDVLIGKLAKRNVDVRFLDYGKVEKIGGDKVKQIVTVKKGVTGDLAKKIVRLVKDSKIKVQASIQGDAVRISGTKRDDLQSTIAMLRKDVTDTPLDFNNFRD</sequence>
<protein>
    <recommendedName>
        <fullName evidence="1">Nucleotide-binding protein BceJ2315_27070</fullName>
    </recommendedName>
</protein>
<proteinExistence type="inferred from homology"/>
<name>Y2707_BURCJ</name>
<comment type="function">
    <text evidence="1">Nucleotide-binding protein.</text>
</comment>
<comment type="similarity">
    <text evidence="1">Belongs to the YajQ family.</text>
</comment>
<feature type="chain" id="PRO_1000130606" description="Nucleotide-binding protein BceJ2315_27070">
    <location>
        <begin position="1"/>
        <end position="161"/>
    </location>
</feature>